<organism>
    <name type="scientific">Agrobacterium fabrum (strain C58 / ATCC 33970)</name>
    <name type="common">Agrobacterium tumefaciens (strain C58)</name>
    <dbReference type="NCBI Taxonomy" id="176299"/>
    <lineage>
        <taxon>Bacteria</taxon>
        <taxon>Pseudomonadati</taxon>
        <taxon>Pseudomonadota</taxon>
        <taxon>Alphaproteobacteria</taxon>
        <taxon>Hyphomicrobiales</taxon>
        <taxon>Rhizobiaceae</taxon>
        <taxon>Rhizobium/Agrobacterium group</taxon>
        <taxon>Agrobacterium</taxon>
        <taxon>Agrobacterium tumefaciens complex</taxon>
    </lineage>
</organism>
<evidence type="ECO:0000250" key="1"/>
<evidence type="ECO:0000305" key="2"/>
<proteinExistence type="inferred from homology"/>
<comment type="function">
    <text evidence="1">Catalyzes the catabolism of the allantoin degradation intermediate (S)-ureidoglycolate, generating urea and glyoxylate. Involved in the utilization of allantoin as nitrogen source (By similarity).</text>
</comment>
<comment type="catalytic activity">
    <reaction>
        <text>(S)-ureidoglycolate = urea + glyoxylate</text>
        <dbReference type="Rhea" id="RHEA:11304"/>
        <dbReference type="ChEBI" id="CHEBI:16199"/>
        <dbReference type="ChEBI" id="CHEBI:36655"/>
        <dbReference type="ChEBI" id="CHEBI:57296"/>
        <dbReference type="EC" id="4.3.2.3"/>
    </reaction>
</comment>
<comment type="cofactor">
    <cofactor evidence="1">
        <name>Ni(2+)</name>
        <dbReference type="ChEBI" id="CHEBI:49786"/>
    </cofactor>
</comment>
<comment type="pathway">
    <text>Nitrogen metabolism; (S)-allantoin degradation.</text>
</comment>
<comment type="subunit">
    <text evidence="1">Homodimer.</text>
</comment>
<comment type="similarity">
    <text evidence="2">Belongs to the ureidoglycolate lyase family.</text>
</comment>
<protein>
    <recommendedName>
        <fullName>Putative ureidoglycolate lyase</fullName>
        <ecNumber>4.3.2.3</ecNumber>
    </recommendedName>
</protein>
<gene>
    <name type="ordered locus">Atu1409</name>
    <name type="ORF">AGR_C_2603</name>
</gene>
<dbReference type="EC" id="4.3.2.3"/>
<dbReference type="EMBL" id="AE007869">
    <property type="protein sequence ID" value="AAK87201.1"/>
    <property type="molecule type" value="Genomic_DNA"/>
</dbReference>
<dbReference type="PIR" id="AI2749">
    <property type="entry name" value="AI2749"/>
</dbReference>
<dbReference type="PIR" id="H97530">
    <property type="entry name" value="H97530"/>
</dbReference>
<dbReference type="RefSeq" id="NP_354416.1">
    <property type="nucleotide sequence ID" value="NC_003062.2"/>
</dbReference>
<dbReference type="RefSeq" id="WP_010971600.1">
    <property type="nucleotide sequence ID" value="NC_003062.2"/>
</dbReference>
<dbReference type="SMR" id="Q8UFI8"/>
<dbReference type="STRING" id="176299.Atu1409"/>
<dbReference type="EnsemblBacteria" id="AAK87201">
    <property type="protein sequence ID" value="AAK87201"/>
    <property type="gene ID" value="Atu1409"/>
</dbReference>
<dbReference type="GeneID" id="1133447"/>
<dbReference type="KEGG" id="atu:Atu1409"/>
<dbReference type="PATRIC" id="fig|176299.10.peg.1432"/>
<dbReference type="eggNOG" id="COG3194">
    <property type="taxonomic scope" value="Bacteria"/>
</dbReference>
<dbReference type="HOGENOM" id="CLU_070848_1_0_5"/>
<dbReference type="OrthoDB" id="9804602at2"/>
<dbReference type="PhylomeDB" id="Q8UFI8"/>
<dbReference type="BioCyc" id="AGRO:ATU1409-MONOMER"/>
<dbReference type="UniPathway" id="UPA00395"/>
<dbReference type="Proteomes" id="UP000000813">
    <property type="component" value="Chromosome circular"/>
</dbReference>
<dbReference type="GO" id="GO:0004848">
    <property type="term" value="F:ureidoglycolate hydrolase activity"/>
    <property type="evidence" value="ECO:0007669"/>
    <property type="project" value="InterPro"/>
</dbReference>
<dbReference type="GO" id="GO:0050385">
    <property type="term" value="F:ureidoglycolate lyase activity"/>
    <property type="evidence" value="ECO:0007669"/>
    <property type="project" value="UniProtKB-EC"/>
</dbReference>
<dbReference type="GO" id="GO:0000256">
    <property type="term" value="P:allantoin catabolic process"/>
    <property type="evidence" value="ECO:0007669"/>
    <property type="project" value="UniProtKB-UniPathway"/>
</dbReference>
<dbReference type="GO" id="GO:0006144">
    <property type="term" value="P:purine nucleobase metabolic process"/>
    <property type="evidence" value="ECO:0007669"/>
    <property type="project" value="UniProtKB-KW"/>
</dbReference>
<dbReference type="CDD" id="cd20298">
    <property type="entry name" value="cupin_UAH"/>
    <property type="match status" value="1"/>
</dbReference>
<dbReference type="Gene3D" id="2.60.120.480">
    <property type="entry name" value="Ureidoglycolate hydrolase"/>
    <property type="match status" value="1"/>
</dbReference>
<dbReference type="InterPro" id="IPR011051">
    <property type="entry name" value="RmlC_Cupin_sf"/>
</dbReference>
<dbReference type="InterPro" id="IPR047233">
    <property type="entry name" value="UAH_cupin"/>
</dbReference>
<dbReference type="InterPro" id="IPR007247">
    <property type="entry name" value="Ureidogly_lyase"/>
</dbReference>
<dbReference type="InterPro" id="IPR024060">
    <property type="entry name" value="Ureidoglycolate_lyase_dom_sf"/>
</dbReference>
<dbReference type="NCBIfam" id="NF009932">
    <property type="entry name" value="PRK13395.1"/>
    <property type="match status" value="1"/>
</dbReference>
<dbReference type="PANTHER" id="PTHR21221">
    <property type="entry name" value="UREIDOGLYCOLATE HYDROLASE"/>
    <property type="match status" value="1"/>
</dbReference>
<dbReference type="PANTHER" id="PTHR21221:SF1">
    <property type="entry name" value="UREIDOGLYCOLATE LYASE"/>
    <property type="match status" value="1"/>
</dbReference>
<dbReference type="Pfam" id="PF04115">
    <property type="entry name" value="Ureidogly_lyase"/>
    <property type="match status" value="1"/>
</dbReference>
<dbReference type="SUPFAM" id="SSF51182">
    <property type="entry name" value="RmlC-like cupins"/>
    <property type="match status" value="1"/>
</dbReference>
<keyword id="KW-0456">Lyase</keyword>
<keyword id="KW-0659">Purine metabolism</keyword>
<keyword id="KW-1185">Reference proteome</keyword>
<accession>Q8UFI8</accession>
<name>ALLH_AGRFC</name>
<reference key="1">
    <citation type="journal article" date="2001" name="Science">
        <title>The genome of the natural genetic engineer Agrobacterium tumefaciens C58.</title>
        <authorList>
            <person name="Wood D.W."/>
            <person name="Setubal J.C."/>
            <person name="Kaul R."/>
            <person name="Monks D.E."/>
            <person name="Kitajima J.P."/>
            <person name="Okura V.K."/>
            <person name="Zhou Y."/>
            <person name="Chen L."/>
            <person name="Wood G.E."/>
            <person name="Almeida N.F. Jr."/>
            <person name="Woo L."/>
            <person name="Chen Y."/>
            <person name="Paulsen I.T."/>
            <person name="Eisen J.A."/>
            <person name="Karp P.D."/>
            <person name="Bovee D. Sr."/>
            <person name="Chapman P."/>
            <person name="Clendenning J."/>
            <person name="Deatherage G."/>
            <person name="Gillet W."/>
            <person name="Grant C."/>
            <person name="Kutyavin T."/>
            <person name="Levy R."/>
            <person name="Li M.-J."/>
            <person name="McClelland E."/>
            <person name="Palmieri A."/>
            <person name="Raymond C."/>
            <person name="Rouse G."/>
            <person name="Saenphimmachak C."/>
            <person name="Wu Z."/>
            <person name="Romero P."/>
            <person name="Gordon D."/>
            <person name="Zhang S."/>
            <person name="Yoo H."/>
            <person name="Tao Y."/>
            <person name="Biddle P."/>
            <person name="Jung M."/>
            <person name="Krespan W."/>
            <person name="Perry M."/>
            <person name="Gordon-Kamm B."/>
            <person name="Liao L."/>
            <person name="Kim S."/>
            <person name="Hendrick C."/>
            <person name="Zhao Z.-Y."/>
            <person name="Dolan M."/>
            <person name="Chumley F."/>
            <person name="Tingey S.V."/>
            <person name="Tomb J.-F."/>
            <person name="Gordon M.P."/>
            <person name="Olson M.V."/>
            <person name="Nester E.W."/>
        </authorList>
    </citation>
    <scope>NUCLEOTIDE SEQUENCE [LARGE SCALE GENOMIC DNA]</scope>
    <source>
        <strain>C58 / ATCC 33970</strain>
    </source>
</reference>
<reference key="2">
    <citation type="journal article" date="2001" name="Science">
        <title>Genome sequence of the plant pathogen and biotechnology agent Agrobacterium tumefaciens C58.</title>
        <authorList>
            <person name="Goodner B."/>
            <person name="Hinkle G."/>
            <person name="Gattung S."/>
            <person name="Miller N."/>
            <person name="Blanchard M."/>
            <person name="Qurollo B."/>
            <person name="Goldman B.S."/>
            <person name="Cao Y."/>
            <person name="Askenazi M."/>
            <person name="Halling C."/>
            <person name="Mullin L."/>
            <person name="Houmiel K."/>
            <person name="Gordon J."/>
            <person name="Vaudin M."/>
            <person name="Iartchouk O."/>
            <person name="Epp A."/>
            <person name="Liu F."/>
            <person name="Wollam C."/>
            <person name="Allinger M."/>
            <person name="Doughty D."/>
            <person name="Scott C."/>
            <person name="Lappas C."/>
            <person name="Markelz B."/>
            <person name="Flanagan C."/>
            <person name="Crowell C."/>
            <person name="Gurson J."/>
            <person name="Lomo C."/>
            <person name="Sear C."/>
            <person name="Strub G."/>
            <person name="Cielo C."/>
            <person name="Slater S."/>
        </authorList>
    </citation>
    <scope>NUCLEOTIDE SEQUENCE [LARGE SCALE GENOMIC DNA]</scope>
    <source>
        <strain>C58 / ATCC 33970</strain>
    </source>
</reference>
<feature type="chain" id="PRO_0000120560" description="Putative ureidoglycolate lyase">
    <location>
        <begin position="1"/>
        <end position="162"/>
    </location>
</feature>
<sequence>MKTVTARPLTAEAFAPYGSVADISELENLVSLADAYEGTGEAKTPVLQLVQAKAMSGSPVISQMEIHPFSSQTFLPLDQSSSLIVVCEAGEDGMPDESTIKAFLASPSQIVTYRHGVMHHRLTPLAPSGRFAMTMWQTGRGGDTVLYPLHTPVSVDISDITP</sequence>